<proteinExistence type="inferred from homology"/>
<name>GPSB_STAAT</name>
<comment type="function">
    <text evidence="1">Divisome component that associates with the complex late in its assembly, after the Z-ring is formed, and is dependent on DivIC and PBP2B for its recruitment to the divisome. Together with EzrA, is a key component of the system that regulates PBP1 localization during cell cycle progression. Its main role could be the removal of PBP1 from the cell pole after pole maturation is completed. Also contributes to the recruitment of PBP1 to the division complex. Not essential for septum formation.</text>
</comment>
<comment type="subunit">
    <text evidence="1">Forms polymers through the coiled coil domains. Interacts with PBP1, MreC and EzrA.</text>
</comment>
<comment type="subcellular location">
    <subcellularLocation>
        <location evidence="1">Cytoplasm</location>
    </subcellularLocation>
    <text evidence="1">Shuttles between the lateral wall and the division site in a cell cycle-dependent manner.</text>
</comment>
<comment type="similarity">
    <text evidence="1">Belongs to the GpsB family.</text>
</comment>
<dbReference type="EMBL" id="CP000730">
    <property type="protein sequence ID" value="ABX29393.1"/>
    <property type="molecule type" value="Genomic_DNA"/>
</dbReference>
<dbReference type="RefSeq" id="WP_001286320.1">
    <property type="nucleotide sequence ID" value="NC_010079.1"/>
</dbReference>
<dbReference type="SMR" id="A8Z425"/>
<dbReference type="GeneID" id="98345812"/>
<dbReference type="KEGG" id="sax:USA300HOU_1383"/>
<dbReference type="HOGENOM" id="CLU_140309_1_0_9"/>
<dbReference type="GO" id="GO:0005737">
    <property type="term" value="C:cytoplasm"/>
    <property type="evidence" value="ECO:0007669"/>
    <property type="project" value="UniProtKB-SubCell"/>
</dbReference>
<dbReference type="GO" id="GO:0051301">
    <property type="term" value="P:cell division"/>
    <property type="evidence" value="ECO:0007669"/>
    <property type="project" value="UniProtKB-UniRule"/>
</dbReference>
<dbReference type="GO" id="GO:0008360">
    <property type="term" value="P:regulation of cell shape"/>
    <property type="evidence" value="ECO:0007669"/>
    <property type="project" value="UniProtKB-UniRule"/>
</dbReference>
<dbReference type="Gene3D" id="6.10.250.660">
    <property type="match status" value="1"/>
</dbReference>
<dbReference type="HAMAP" id="MF_02011">
    <property type="entry name" value="GpsB"/>
    <property type="match status" value="1"/>
</dbReference>
<dbReference type="InterPro" id="IPR011229">
    <property type="entry name" value="Cell_cycle_GpsB"/>
</dbReference>
<dbReference type="InterPro" id="IPR019933">
    <property type="entry name" value="DivIVA_domain"/>
</dbReference>
<dbReference type="InterPro" id="IPR007793">
    <property type="entry name" value="DivIVA_fam"/>
</dbReference>
<dbReference type="NCBIfam" id="TIGR03544">
    <property type="entry name" value="DivI1A_domain"/>
    <property type="match status" value="1"/>
</dbReference>
<dbReference type="NCBIfam" id="NF010725">
    <property type="entry name" value="PRK14127.1"/>
    <property type="match status" value="1"/>
</dbReference>
<dbReference type="PANTHER" id="PTHR35794:SF1">
    <property type="entry name" value="CELL CYCLE PROTEIN GPSB"/>
    <property type="match status" value="1"/>
</dbReference>
<dbReference type="PANTHER" id="PTHR35794">
    <property type="entry name" value="CELL DIVISION PROTEIN DIVIVA"/>
    <property type="match status" value="1"/>
</dbReference>
<dbReference type="Pfam" id="PF05103">
    <property type="entry name" value="DivIVA"/>
    <property type="match status" value="1"/>
</dbReference>
<dbReference type="PIRSF" id="PIRSF029938">
    <property type="entry name" value="UCP029938"/>
    <property type="match status" value="1"/>
</dbReference>
<feature type="chain" id="PRO_0000337943" description="Cell cycle protein GpsB">
    <location>
        <begin position="1"/>
        <end position="114"/>
    </location>
</feature>
<feature type="region of interest" description="Disordered" evidence="2">
    <location>
        <begin position="74"/>
        <end position="99"/>
    </location>
</feature>
<feature type="coiled-coil region" evidence="1">
    <location>
        <begin position="42"/>
        <end position="77"/>
    </location>
</feature>
<feature type="compositionally biased region" description="Low complexity" evidence="2">
    <location>
        <begin position="85"/>
        <end position="97"/>
    </location>
</feature>
<reference key="1">
    <citation type="journal article" date="2007" name="BMC Microbiol.">
        <title>Subtle genetic changes enhance virulence of methicillin resistant and sensitive Staphylococcus aureus.</title>
        <authorList>
            <person name="Highlander S.K."/>
            <person name="Hulten K.G."/>
            <person name="Qin X."/>
            <person name="Jiang H."/>
            <person name="Yerrapragada S."/>
            <person name="Mason E.O. Jr."/>
            <person name="Shang Y."/>
            <person name="Williams T.M."/>
            <person name="Fortunov R.M."/>
            <person name="Liu Y."/>
            <person name="Igboeli O."/>
            <person name="Petrosino J."/>
            <person name="Tirumalai M."/>
            <person name="Uzman A."/>
            <person name="Fox G.E."/>
            <person name="Cardenas A.M."/>
            <person name="Muzny D.M."/>
            <person name="Hemphill L."/>
            <person name="Ding Y."/>
            <person name="Dugan S."/>
            <person name="Blyth P.R."/>
            <person name="Buhay C.J."/>
            <person name="Dinh H.H."/>
            <person name="Hawes A.C."/>
            <person name="Holder M."/>
            <person name="Kovar C.L."/>
            <person name="Lee S.L."/>
            <person name="Liu W."/>
            <person name="Nazareth L.V."/>
            <person name="Wang Q."/>
            <person name="Zhou J."/>
            <person name="Kaplan S.L."/>
            <person name="Weinstock G.M."/>
        </authorList>
    </citation>
    <scope>NUCLEOTIDE SEQUENCE [LARGE SCALE GENOMIC DNA]</scope>
    <source>
        <strain>USA300 / TCH1516</strain>
    </source>
</reference>
<keyword id="KW-0131">Cell cycle</keyword>
<keyword id="KW-0132">Cell division</keyword>
<keyword id="KW-0133">Cell shape</keyword>
<keyword id="KW-0175">Coiled coil</keyword>
<keyword id="KW-0963">Cytoplasm</keyword>
<accession>A8Z425</accession>
<sequence>MSDVSLKLSAKDIYEKDFEKTMARGYRREEVDAFLDDIIADYQKMADMNNEVVKLSEENHKLKKELEELRLRVATSRPQDNKSFSSNNTTTNTSSNNVDILKRISNLEKAVFGK</sequence>
<evidence type="ECO:0000255" key="1">
    <source>
        <dbReference type="HAMAP-Rule" id="MF_02011"/>
    </source>
</evidence>
<evidence type="ECO:0000256" key="2">
    <source>
        <dbReference type="SAM" id="MobiDB-lite"/>
    </source>
</evidence>
<protein>
    <recommendedName>
        <fullName evidence="1">Cell cycle protein GpsB</fullName>
    </recommendedName>
    <alternativeName>
        <fullName evidence="1">Guiding PBP1-shuttling protein</fullName>
    </alternativeName>
</protein>
<organism>
    <name type="scientific">Staphylococcus aureus (strain USA300 / TCH1516)</name>
    <dbReference type="NCBI Taxonomy" id="451516"/>
    <lineage>
        <taxon>Bacteria</taxon>
        <taxon>Bacillati</taxon>
        <taxon>Bacillota</taxon>
        <taxon>Bacilli</taxon>
        <taxon>Bacillales</taxon>
        <taxon>Staphylococcaceae</taxon>
        <taxon>Staphylococcus</taxon>
    </lineage>
</organism>
<gene>
    <name evidence="1" type="primary">gpsB</name>
    <name type="ordered locus">USA300HOU_1383</name>
</gene>